<gene>
    <name evidence="1" type="primary">clpS</name>
    <name type="ordered locus">VC_1143</name>
</gene>
<keyword id="KW-1185">Reference proteome</keyword>
<organism>
    <name type="scientific">Vibrio cholerae serotype O1 (strain ATCC 39315 / El Tor Inaba N16961)</name>
    <dbReference type="NCBI Taxonomy" id="243277"/>
    <lineage>
        <taxon>Bacteria</taxon>
        <taxon>Pseudomonadati</taxon>
        <taxon>Pseudomonadota</taxon>
        <taxon>Gammaproteobacteria</taxon>
        <taxon>Vibrionales</taxon>
        <taxon>Vibrionaceae</taxon>
        <taxon>Vibrio</taxon>
    </lineage>
</organism>
<sequence length="106" mass="12314">MSKNFEWISPDFDLLEKEKTAVKPPSMYHVVLNNDDYTPMDFVIEILERFFSMDIERATQVMLKVHYEGKAICGTFTAEVAETKVAQVTMYSRENEHPLLCTMEQA</sequence>
<protein>
    <recommendedName>
        <fullName evidence="1">ATP-dependent Clp protease adapter protein ClpS</fullName>
    </recommendedName>
</protein>
<proteinExistence type="inferred from homology"/>
<comment type="function">
    <text evidence="1">Involved in the modulation of the specificity of the ClpAP-mediated ATP-dependent protein degradation.</text>
</comment>
<comment type="subunit">
    <text evidence="1">Binds to the N-terminal domain of the chaperone ClpA.</text>
</comment>
<comment type="similarity">
    <text evidence="1">Belongs to the ClpS family.</text>
</comment>
<dbReference type="EMBL" id="AE003852">
    <property type="protein sequence ID" value="AAF94302.1"/>
    <property type="molecule type" value="Genomic_DNA"/>
</dbReference>
<dbReference type="PIR" id="D82236">
    <property type="entry name" value="D82236"/>
</dbReference>
<dbReference type="RefSeq" id="NP_230788.1">
    <property type="nucleotide sequence ID" value="NC_002505.1"/>
</dbReference>
<dbReference type="RefSeq" id="WP_000041728.1">
    <property type="nucleotide sequence ID" value="NZ_LT906614.1"/>
</dbReference>
<dbReference type="SMR" id="Q9KSW3"/>
<dbReference type="STRING" id="243277.VC_1143"/>
<dbReference type="DNASU" id="2614576"/>
<dbReference type="EnsemblBacteria" id="AAF94302">
    <property type="protein sequence ID" value="AAF94302"/>
    <property type="gene ID" value="VC_1143"/>
</dbReference>
<dbReference type="GeneID" id="89514115"/>
<dbReference type="KEGG" id="vch:VC_1143"/>
<dbReference type="PATRIC" id="fig|243277.26.peg.1092"/>
<dbReference type="eggNOG" id="COG2127">
    <property type="taxonomic scope" value="Bacteria"/>
</dbReference>
<dbReference type="HOGENOM" id="CLU_134358_2_1_6"/>
<dbReference type="Proteomes" id="UP000000584">
    <property type="component" value="Chromosome 1"/>
</dbReference>
<dbReference type="GO" id="GO:0030163">
    <property type="term" value="P:protein catabolic process"/>
    <property type="evidence" value="ECO:0007669"/>
    <property type="project" value="InterPro"/>
</dbReference>
<dbReference type="GO" id="GO:0006508">
    <property type="term" value="P:proteolysis"/>
    <property type="evidence" value="ECO:0007669"/>
    <property type="project" value="UniProtKB-UniRule"/>
</dbReference>
<dbReference type="FunFam" id="3.30.1390.10:FF:000002">
    <property type="entry name" value="ATP-dependent Clp protease adapter protein ClpS"/>
    <property type="match status" value="1"/>
</dbReference>
<dbReference type="Gene3D" id="3.30.1390.10">
    <property type="match status" value="1"/>
</dbReference>
<dbReference type="HAMAP" id="MF_00302">
    <property type="entry name" value="ClpS"/>
    <property type="match status" value="1"/>
</dbReference>
<dbReference type="InterPro" id="IPR022935">
    <property type="entry name" value="ClpS"/>
</dbReference>
<dbReference type="InterPro" id="IPR003769">
    <property type="entry name" value="ClpS_core"/>
</dbReference>
<dbReference type="InterPro" id="IPR014719">
    <property type="entry name" value="Ribosomal_bL12_C/ClpS-like"/>
</dbReference>
<dbReference type="NCBIfam" id="NF000670">
    <property type="entry name" value="PRK00033.1-3"/>
    <property type="match status" value="1"/>
</dbReference>
<dbReference type="NCBIfam" id="NF000672">
    <property type="entry name" value="PRK00033.1-5"/>
    <property type="match status" value="1"/>
</dbReference>
<dbReference type="PANTHER" id="PTHR33473:SF19">
    <property type="entry name" value="ATP-DEPENDENT CLP PROTEASE ADAPTER PROTEIN CLPS"/>
    <property type="match status" value="1"/>
</dbReference>
<dbReference type="PANTHER" id="PTHR33473">
    <property type="entry name" value="ATP-DEPENDENT CLP PROTEASE ADAPTER PROTEIN CLPS1, CHLOROPLASTIC"/>
    <property type="match status" value="1"/>
</dbReference>
<dbReference type="Pfam" id="PF02617">
    <property type="entry name" value="ClpS"/>
    <property type="match status" value="1"/>
</dbReference>
<dbReference type="SUPFAM" id="SSF54736">
    <property type="entry name" value="ClpS-like"/>
    <property type="match status" value="1"/>
</dbReference>
<feature type="chain" id="PRO_0000215756" description="ATP-dependent Clp protease adapter protein ClpS">
    <location>
        <begin position="1"/>
        <end position="106"/>
    </location>
</feature>
<accession>Q9KSW3</accession>
<name>CLPS_VIBCH</name>
<reference key="1">
    <citation type="journal article" date="2000" name="Nature">
        <title>DNA sequence of both chromosomes of the cholera pathogen Vibrio cholerae.</title>
        <authorList>
            <person name="Heidelberg J.F."/>
            <person name="Eisen J.A."/>
            <person name="Nelson W.C."/>
            <person name="Clayton R.A."/>
            <person name="Gwinn M.L."/>
            <person name="Dodson R.J."/>
            <person name="Haft D.H."/>
            <person name="Hickey E.K."/>
            <person name="Peterson J.D."/>
            <person name="Umayam L.A."/>
            <person name="Gill S.R."/>
            <person name="Nelson K.E."/>
            <person name="Read T.D."/>
            <person name="Tettelin H."/>
            <person name="Richardson D.L."/>
            <person name="Ermolaeva M.D."/>
            <person name="Vamathevan J.J."/>
            <person name="Bass S."/>
            <person name="Qin H."/>
            <person name="Dragoi I."/>
            <person name="Sellers P."/>
            <person name="McDonald L.A."/>
            <person name="Utterback T.R."/>
            <person name="Fleischmann R.D."/>
            <person name="Nierman W.C."/>
            <person name="White O."/>
            <person name="Salzberg S.L."/>
            <person name="Smith H.O."/>
            <person name="Colwell R.R."/>
            <person name="Mekalanos J.J."/>
            <person name="Venter J.C."/>
            <person name="Fraser C.M."/>
        </authorList>
    </citation>
    <scope>NUCLEOTIDE SEQUENCE [LARGE SCALE GENOMIC DNA]</scope>
    <source>
        <strain>ATCC 39315 / El Tor Inaba N16961</strain>
    </source>
</reference>
<evidence type="ECO:0000255" key="1">
    <source>
        <dbReference type="HAMAP-Rule" id="MF_00302"/>
    </source>
</evidence>